<proteinExistence type="inferred from homology"/>
<dbReference type="EC" id="3.1.26.4" evidence="1"/>
<dbReference type="EMBL" id="AM933172">
    <property type="protein sequence ID" value="CAR31852.1"/>
    <property type="molecule type" value="Genomic_DNA"/>
</dbReference>
<dbReference type="RefSeq" id="WP_000917872.1">
    <property type="nucleotide sequence ID" value="NC_011294.1"/>
</dbReference>
<dbReference type="SMR" id="B5R449"/>
<dbReference type="KEGG" id="set:SEN0265"/>
<dbReference type="HOGENOM" id="CLU_030894_6_0_6"/>
<dbReference type="Proteomes" id="UP000000613">
    <property type="component" value="Chromosome"/>
</dbReference>
<dbReference type="GO" id="GO:0005737">
    <property type="term" value="C:cytoplasm"/>
    <property type="evidence" value="ECO:0007669"/>
    <property type="project" value="UniProtKB-SubCell"/>
</dbReference>
<dbReference type="GO" id="GO:0000287">
    <property type="term" value="F:magnesium ion binding"/>
    <property type="evidence" value="ECO:0007669"/>
    <property type="project" value="UniProtKB-UniRule"/>
</dbReference>
<dbReference type="GO" id="GO:0003676">
    <property type="term" value="F:nucleic acid binding"/>
    <property type="evidence" value="ECO:0007669"/>
    <property type="project" value="InterPro"/>
</dbReference>
<dbReference type="GO" id="GO:0004523">
    <property type="term" value="F:RNA-DNA hybrid ribonuclease activity"/>
    <property type="evidence" value="ECO:0007669"/>
    <property type="project" value="UniProtKB-UniRule"/>
</dbReference>
<dbReference type="GO" id="GO:0043137">
    <property type="term" value="P:DNA replication, removal of RNA primer"/>
    <property type="evidence" value="ECO:0007669"/>
    <property type="project" value="TreeGrafter"/>
</dbReference>
<dbReference type="CDD" id="cd09278">
    <property type="entry name" value="RNase_HI_prokaryote_like"/>
    <property type="match status" value="1"/>
</dbReference>
<dbReference type="FunFam" id="3.30.420.10:FF:000008">
    <property type="entry name" value="Ribonuclease H"/>
    <property type="match status" value="1"/>
</dbReference>
<dbReference type="Gene3D" id="3.30.420.10">
    <property type="entry name" value="Ribonuclease H-like superfamily/Ribonuclease H"/>
    <property type="match status" value="1"/>
</dbReference>
<dbReference type="HAMAP" id="MF_00042">
    <property type="entry name" value="RNase_H"/>
    <property type="match status" value="1"/>
</dbReference>
<dbReference type="InterPro" id="IPR050092">
    <property type="entry name" value="RNase_H"/>
</dbReference>
<dbReference type="InterPro" id="IPR012337">
    <property type="entry name" value="RNaseH-like_sf"/>
</dbReference>
<dbReference type="InterPro" id="IPR002156">
    <property type="entry name" value="RNaseH_domain"/>
</dbReference>
<dbReference type="InterPro" id="IPR036397">
    <property type="entry name" value="RNaseH_sf"/>
</dbReference>
<dbReference type="InterPro" id="IPR022892">
    <property type="entry name" value="RNaseHI"/>
</dbReference>
<dbReference type="NCBIfam" id="NF001236">
    <property type="entry name" value="PRK00203.1"/>
    <property type="match status" value="1"/>
</dbReference>
<dbReference type="PANTHER" id="PTHR10642">
    <property type="entry name" value="RIBONUCLEASE H1"/>
    <property type="match status" value="1"/>
</dbReference>
<dbReference type="PANTHER" id="PTHR10642:SF26">
    <property type="entry name" value="RIBONUCLEASE H1"/>
    <property type="match status" value="1"/>
</dbReference>
<dbReference type="Pfam" id="PF00075">
    <property type="entry name" value="RNase_H"/>
    <property type="match status" value="1"/>
</dbReference>
<dbReference type="SUPFAM" id="SSF53098">
    <property type="entry name" value="Ribonuclease H-like"/>
    <property type="match status" value="1"/>
</dbReference>
<dbReference type="PROSITE" id="PS50879">
    <property type="entry name" value="RNASE_H_1"/>
    <property type="match status" value="1"/>
</dbReference>
<reference key="1">
    <citation type="journal article" date="2008" name="Genome Res.">
        <title>Comparative genome analysis of Salmonella enteritidis PT4 and Salmonella gallinarum 287/91 provides insights into evolutionary and host adaptation pathways.</title>
        <authorList>
            <person name="Thomson N.R."/>
            <person name="Clayton D.J."/>
            <person name="Windhorst D."/>
            <person name="Vernikos G."/>
            <person name="Davidson S."/>
            <person name="Churcher C."/>
            <person name="Quail M.A."/>
            <person name="Stevens M."/>
            <person name="Jones M.A."/>
            <person name="Watson M."/>
            <person name="Barron A."/>
            <person name="Layton A."/>
            <person name="Pickard D."/>
            <person name="Kingsley R.A."/>
            <person name="Bignell A."/>
            <person name="Clark L."/>
            <person name="Harris B."/>
            <person name="Ormond D."/>
            <person name="Abdellah Z."/>
            <person name="Brooks K."/>
            <person name="Cherevach I."/>
            <person name="Chillingworth T."/>
            <person name="Woodward J."/>
            <person name="Norberczak H."/>
            <person name="Lord A."/>
            <person name="Arrowsmith C."/>
            <person name="Jagels K."/>
            <person name="Moule S."/>
            <person name="Mungall K."/>
            <person name="Saunders M."/>
            <person name="Whitehead S."/>
            <person name="Chabalgoity J.A."/>
            <person name="Maskell D."/>
            <person name="Humphreys T."/>
            <person name="Roberts M."/>
            <person name="Barrow P.A."/>
            <person name="Dougan G."/>
            <person name="Parkhill J."/>
        </authorList>
    </citation>
    <scope>NUCLEOTIDE SEQUENCE [LARGE SCALE GENOMIC DNA]</scope>
    <source>
        <strain>P125109</strain>
    </source>
</reference>
<name>RNH_SALEP</name>
<accession>B5R449</accession>
<gene>
    <name evidence="1" type="primary">rnhA</name>
    <name type="ordered locus">SEN0265</name>
</gene>
<organism>
    <name type="scientific">Salmonella enteritidis PT4 (strain P125109)</name>
    <dbReference type="NCBI Taxonomy" id="550537"/>
    <lineage>
        <taxon>Bacteria</taxon>
        <taxon>Pseudomonadati</taxon>
        <taxon>Pseudomonadota</taxon>
        <taxon>Gammaproteobacteria</taxon>
        <taxon>Enterobacterales</taxon>
        <taxon>Enterobacteriaceae</taxon>
        <taxon>Salmonella</taxon>
    </lineage>
</organism>
<keyword id="KW-0963">Cytoplasm</keyword>
<keyword id="KW-0255">Endonuclease</keyword>
<keyword id="KW-0378">Hydrolase</keyword>
<keyword id="KW-0460">Magnesium</keyword>
<keyword id="KW-0479">Metal-binding</keyword>
<keyword id="KW-0540">Nuclease</keyword>
<evidence type="ECO:0000255" key="1">
    <source>
        <dbReference type="HAMAP-Rule" id="MF_00042"/>
    </source>
</evidence>
<evidence type="ECO:0000255" key="2">
    <source>
        <dbReference type="PROSITE-ProRule" id="PRU00408"/>
    </source>
</evidence>
<comment type="function">
    <text evidence="1">Endonuclease that specifically degrades the RNA of RNA-DNA hybrids.</text>
</comment>
<comment type="catalytic activity">
    <reaction evidence="1">
        <text>Endonucleolytic cleavage to 5'-phosphomonoester.</text>
        <dbReference type="EC" id="3.1.26.4"/>
    </reaction>
</comment>
<comment type="cofactor">
    <cofactor evidence="1">
        <name>Mg(2+)</name>
        <dbReference type="ChEBI" id="CHEBI:18420"/>
    </cofactor>
    <text evidence="1">Binds 1 Mg(2+) ion per subunit. May bind a second metal ion at a regulatory site, or after substrate binding.</text>
</comment>
<comment type="subunit">
    <text evidence="1">Monomer.</text>
</comment>
<comment type="subcellular location">
    <subcellularLocation>
        <location evidence="1">Cytoplasm</location>
    </subcellularLocation>
</comment>
<comment type="similarity">
    <text evidence="1">Belongs to the RNase H family.</text>
</comment>
<protein>
    <recommendedName>
        <fullName evidence="1">Ribonuclease H</fullName>
        <shortName evidence="1">RNase H</shortName>
        <ecNumber evidence="1">3.1.26.4</ecNumber>
    </recommendedName>
</protein>
<sequence>MLKQVEIFTDGSCLGNPGPGGYGAILRYRGHEKTFSEGYTLTTNNRMELMAAIVALEALKEHCEVTLSTDSQYVRQGITQWIHNWKKRGWKTAEKKPVKNVDLWKRLDAALGQHQIKWVWVKGHAGHPENERCDELARAAAMNPTQEDSGYQAEA</sequence>
<feature type="chain" id="PRO_1000090913" description="Ribonuclease H">
    <location>
        <begin position="1"/>
        <end position="155"/>
    </location>
</feature>
<feature type="domain" description="RNase H type-1" evidence="2">
    <location>
        <begin position="1"/>
        <end position="142"/>
    </location>
</feature>
<feature type="binding site" evidence="1">
    <location>
        <position position="10"/>
    </location>
    <ligand>
        <name>Mg(2+)</name>
        <dbReference type="ChEBI" id="CHEBI:18420"/>
        <label>1</label>
    </ligand>
</feature>
<feature type="binding site" evidence="1">
    <location>
        <position position="10"/>
    </location>
    <ligand>
        <name>Mg(2+)</name>
        <dbReference type="ChEBI" id="CHEBI:18420"/>
        <label>2</label>
    </ligand>
</feature>
<feature type="binding site" evidence="1">
    <location>
        <position position="48"/>
    </location>
    <ligand>
        <name>Mg(2+)</name>
        <dbReference type="ChEBI" id="CHEBI:18420"/>
        <label>1</label>
    </ligand>
</feature>
<feature type="binding site" evidence="1">
    <location>
        <position position="70"/>
    </location>
    <ligand>
        <name>Mg(2+)</name>
        <dbReference type="ChEBI" id="CHEBI:18420"/>
        <label>1</label>
    </ligand>
</feature>
<feature type="binding site" evidence="1">
    <location>
        <position position="134"/>
    </location>
    <ligand>
        <name>Mg(2+)</name>
        <dbReference type="ChEBI" id="CHEBI:18420"/>
        <label>2</label>
    </ligand>
</feature>